<name>3MGH_LEIXX</name>
<reference key="1">
    <citation type="journal article" date="2004" name="Mol. Plant Microbe Interact.">
        <title>The genome sequence of the Gram-positive sugarcane pathogen Leifsonia xyli subsp. xyli.</title>
        <authorList>
            <person name="Monteiro-Vitorello C.B."/>
            <person name="Camargo L.E.A."/>
            <person name="Van Sluys M.A."/>
            <person name="Kitajima J.P."/>
            <person name="Truffi D."/>
            <person name="do Amaral A.M."/>
            <person name="Harakava R."/>
            <person name="de Oliveira J.C.F."/>
            <person name="Wood D."/>
            <person name="de Oliveira M.C."/>
            <person name="Miyaki C.Y."/>
            <person name="Takita M.A."/>
            <person name="da Silva A.C.R."/>
            <person name="Furlan L.R."/>
            <person name="Carraro D.M."/>
            <person name="Camarotte G."/>
            <person name="Almeida N.F. Jr."/>
            <person name="Carrer H."/>
            <person name="Coutinho L.L."/>
            <person name="El-Dorry H.A."/>
            <person name="Ferro M.I.T."/>
            <person name="Gagliardi P.R."/>
            <person name="Giglioti E."/>
            <person name="Goldman M.H.S."/>
            <person name="Goldman G.H."/>
            <person name="Kimura E.T."/>
            <person name="Ferro E.S."/>
            <person name="Kuramae E.E."/>
            <person name="Lemos E.G.M."/>
            <person name="Lemos M.V.F."/>
            <person name="Mauro S.M.Z."/>
            <person name="Machado M.A."/>
            <person name="Marino C.L."/>
            <person name="Menck C.F."/>
            <person name="Nunes L.R."/>
            <person name="Oliveira R.C."/>
            <person name="Pereira G.G."/>
            <person name="Siqueira W."/>
            <person name="de Souza A.A."/>
            <person name="Tsai S.M."/>
            <person name="Zanca A.S."/>
            <person name="Simpson A.J.G."/>
            <person name="Brumbley S.M."/>
            <person name="Setubal J.C."/>
        </authorList>
    </citation>
    <scope>NUCLEOTIDE SEQUENCE [LARGE SCALE GENOMIC DNA]</scope>
    <source>
        <strain>CTCB07</strain>
    </source>
</reference>
<gene>
    <name type="ordered locus">Lxx06100</name>
</gene>
<proteinExistence type="inferred from homology"/>
<feature type="chain" id="PRO_0000265033" description="Putative 3-methyladenine DNA glycosylase">
    <location>
        <begin position="1"/>
        <end position="213"/>
    </location>
</feature>
<organism>
    <name type="scientific">Leifsonia xyli subsp. xyli (strain CTCB07)</name>
    <dbReference type="NCBI Taxonomy" id="281090"/>
    <lineage>
        <taxon>Bacteria</taxon>
        <taxon>Bacillati</taxon>
        <taxon>Actinomycetota</taxon>
        <taxon>Actinomycetes</taxon>
        <taxon>Micrococcales</taxon>
        <taxon>Microbacteriaceae</taxon>
        <taxon>Leifsonia</taxon>
    </lineage>
</organism>
<dbReference type="EC" id="3.2.2.-" evidence="1"/>
<dbReference type="EMBL" id="AE016822">
    <property type="protein sequence ID" value="AAT88569.1"/>
    <property type="molecule type" value="Genomic_DNA"/>
</dbReference>
<dbReference type="SMR" id="Q6AGC6"/>
<dbReference type="STRING" id="281090.Lxx06100"/>
<dbReference type="KEGG" id="lxx:Lxx06100"/>
<dbReference type="eggNOG" id="COG2094">
    <property type="taxonomic scope" value="Bacteria"/>
</dbReference>
<dbReference type="HOGENOM" id="CLU_060471_3_0_11"/>
<dbReference type="Proteomes" id="UP000001306">
    <property type="component" value="Chromosome"/>
</dbReference>
<dbReference type="GO" id="GO:0003905">
    <property type="term" value="F:alkylbase DNA N-glycosylase activity"/>
    <property type="evidence" value="ECO:0007669"/>
    <property type="project" value="InterPro"/>
</dbReference>
<dbReference type="GO" id="GO:0003677">
    <property type="term" value="F:DNA binding"/>
    <property type="evidence" value="ECO:0007669"/>
    <property type="project" value="InterPro"/>
</dbReference>
<dbReference type="GO" id="GO:0006284">
    <property type="term" value="P:base-excision repair"/>
    <property type="evidence" value="ECO:0007669"/>
    <property type="project" value="InterPro"/>
</dbReference>
<dbReference type="CDD" id="cd00540">
    <property type="entry name" value="AAG"/>
    <property type="match status" value="1"/>
</dbReference>
<dbReference type="Gene3D" id="3.10.300.10">
    <property type="entry name" value="Methylpurine-DNA glycosylase (MPG)"/>
    <property type="match status" value="1"/>
</dbReference>
<dbReference type="HAMAP" id="MF_00527">
    <property type="entry name" value="3MGH"/>
    <property type="match status" value="1"/>
</dbReference>
<dbReference type="InterPro" id="IPR011034">
    <property type="entry name" value="Formyl_transferase-like_C_sf"/>
</dbReference>
<dbReference type="InterPro" id="IPR003180">
    <property type="entry name" value="MPG"/>
</dbReference>
<dbReference type="InterPro" id="IPR036995">
    <property type="entry name" value="MPG_sf"/>
</dbReference>
<dbReference type="NCBIfam" id="TIGR00567">
    <property type="entry name" value="3mg"/>
    <property type="match status" value="1"/>
</dbReference>
<dbReference type="NCBIfam" id="NF002003">
    <property type="entry name" value="PRK00802.1-3"/>
    <property type="match status" value="1"/>
</dbReference>
<dbReference type="PANTHER" id="PTHR10429">
    <property type="entry name" value="DNA-3-METHYLADENINE GLYCOSYLASE"/>
    <property type="match status" value="1"/>
</dbReference>
<dbReference type="PANTHER" id="PTHR10429:SF0">
    <property type="entry name" value="DNA-3-METHYLADENINE GLYCOSYLASE"/>
    <property type="match status" value="1"/>
</dbReference>
<dbReference type="Pfam" id="PF02245">
    <property type="entry name" value="Pur_DNA_glyco"/>
    <property type="match status" value="1"/>
</dbReference>
<dbReference type="SUPFAM" id="SSF50486">
    <property type="entry name" value="FMT C-terminal domain-like"/>
    <property type="match status" value="1"/>
</dbReference>
<protein>
    <recommendedName>
        <fullName evidence="1">Putative 3-methyladenine DNA glycosylase</fullName>
        <ecNumber evidence="1">3.2.2.-</ecNumber>
    </recommendedName>
</protein>
<keyword id="KW-0227">DNA damage</keyword>
<keyword id="KW-0234">DNA repair</keyword>
<keyword id="KW-0378">Hydrolase</keyword>
<keyword id="KW-1185">Reference proteome</keyword>
<comment type="similarity">
    <text evidence="1">Belongs to the DNA glycosylase MPG family.</text>
</comment>
<evidence type="ECO:0000255" key="1">
    <source>
        <dbReference type="HAMAP-Rule" id="MF_00527"/>
    </source>
</evidence>
<sequence>MSSDVTLAQPGRDAFLASSLEVAPRLLGAVLRHESAEGPVALRITEVEAYTGEGLDPGSHAFRGPTRRNAAMYGEPGRLYAYFTYGMHVCANVVCSPAGEASAVLLRGAEIVEGLALAERRRAGASGRRIPQRDLARGPARLVVAAGIGLADDGADLLAPPFGLLLPSVQPEYATGPRTGVSGAGGGAAFPWRYWLPGEPSVSPYKRHPASHG</sequence>
<accession>Q6AGC6</accession>